<comment type="function">
    <text evidence="1">Ligates lysine onto the cytidine present at position 34 of the AUA codon-specific tRNA(Ile) that contains the anticodon CAU, in an ATP-dependent manner. Cytidine is converted to lysidine, thus changing the amino acid specificity of the tRNA from methionine to isoleucine (By similarity).</text>
</comment>
<comment type="catalytic activity">
    <reaction>
        <text>IMP + diphosphate = hypoxanthine + 5-phospho-alpha-D-ribose 1-diphosphate</text>
        <dbReference type="Rhea" id="RHEA:17973"/>
        <dbReference type="ChEBI" id="CHEBI:17368"/>
        <dbReference type="ChEBI" id="CHEBI:33019"/>
        <dbReference type="ChEBI" id="CHEBI:58017"/>
        <dbReference type="ChEBI" id="CHEBI:58053"/>
        <dbReference type="EC" id="2.4.2.8"/>
    </reaction>
</comment>
<comment type="catalytic activity">
    <reaction>
        <text>GMP + diphosphate = guanine + 5-phospho-alpha-D-ribose 1-diphosphate</text>
        <dbReference type="Rhea" id="RHEA:25424"/>
        <dbReference type="ChEBI" id="CHEBI:16235"/>
        <dbReference type="ChEBI" id="CHEBI:33019"/>
        <dbReference type="ChEBI" id="CHEBI:58017"/>
        <dbReference type="ChEBI" id="CHEBI:58115"/>
        <dbReference type="EC" id="2.4.2.8"/>
    </reaction>
</comment>
<comment type="catalytic activity">
    <reaction>
        <text>cytidine(34) in tRNA(Ile2) + L-lysine + ATP = lysidine(34) in tRNA(Ile2) + AMP + diphosphate + H(+)</text>
        <dbReference type="Rhea" id="RHEA:43744"/>
        <dbReference type="Rhea" id="RHEA-COMP:10625"/>
        <dbReference type="Rhea" id="RHEA-COMP:10670"/>
        <dbReference type="ChEBI" id="CHEBI:15378"/>
        <dbReference type="ChEBI" id="CHEBI:30616"/>
        <dbReference type="ChEBI" id="CHEBI:32551"/>
        <dbReference type="ChEBI" id="CHEBI:33019"/>
        <dbReference type="ChEBI" id="CHEBI:82748"/>
        <dbReference type="ChEBI" id="CHEBI:83665"/>
        <dbReference type="ChEBI" id="CHEBI:456215"/>
        <dbReference type="EC" id="6.3.4.19"/>
    </reaction>
</comment>
<comment type="cofactor">
    <cofactor evidence="1">
        <name>Mg(2+)</name>
        <dbReference type="ChEBI" id="CHEBI:18420"/>
    </cofactor>
    <text evidence="1">Binds 2 magnesium ions per subunit. One of the ions does not make direct protein contacts.</text>
</comment>
<comment type="subcellular location">
    <subcellularLocation>
        <location evidence="1">Cytoplasm</location>
    </subcellularLocation>
</comment>
<comment type="domain">
    <text>The N-terminal region contains the highly conserved SGGXDS motif, predicted to be a P-loop motif involved in ATP binding.</text>
</comment>
<comment type="similarity">
    <text evidence="3">In the N-terminal section; belongs to the tRNA(Ile)-lysidine synthase family.</text>
</comment>
<comment type="similarity">
    <text evidence="3">In the C-terminal section; belongs to the purine/pyrimidine phosphoribosyltransferase family.</text>
</comment>
<sequence>MDDTEKRVHKYIEKHDLIRSDDKLLVAVSGGPDSLALLHFLWNSNLVPKEAISVAHLNHQLRENAAKEQRVVETFCERQGIPFYIEEVDIKSRAQSLQKGLEETARIVRYDFFEKVMAEKNINKLVLAHHADDQIETILMRLVRGSASIGWSGIQPKRELKGGQAIRPFLPITKAEIIDYAQKHELAYEIDESNTSQEYTRNRYRAQLLPFLKQENPAVYSHFERFSEETSEDFQFLEALASDLLKKNLIKNGKQTTLLLSSFKNEANPLQRRAIHLLLRYLYNEDASFITVNHIYQIIQMIQSDNPSSSIDLPNKLIANRAYDKLHFQFGEREAPSEFYHQLELNDRIELDNKASIRLKLKSSVVQTNGLNGMLLDAEEITLPLIVRNRVNGDRMTMKGQAGSKKLKDIFIDAKIPRQERDKLPVITDYTGKILWVPGVKKSAYDREFSRSKKQYIIRYTRNIGGNESMHNDIQKVLISEDELQEKIRELGRELTTEYEGRNPLVVGVLKGATPFMTDLLKRVDTYLEMDFMDVSSYGNGTVSSGEVKIIKDLNASVEGRDVLVIEDIIDSGRTLSYLVDLIKYRKAKSVKLVTLLDKPAGRNVEIEADYVGFVVPNEFVVGYGLDYAERYRNLPYIGILKPEIYSE</sequence>
<organism>
    <name type="scientific">Listeria monocytogenes serovar 1/2a (strain ATCC BAA-679 / EGD-e)</name>
    <dbReference type="NCBI Taxonomy" id="169963"/>
    <lineage>
        <taxon>Bacteria</taxon>
        <taxon>Bacillati</taxon>
        <taxon>Bacillota</taxon>
        <taxon>Bacilli</taxon>
        <taxon>Bacillales</taxon>
        <taxon>Listeriaceae</taxon>
        <taxon>Listeria</taxon>
    </lineage>
</organism>
<dbReference type="EC" id="6.3.4.19"/>
<dbReference type="EC" id="2.4.2.8"/>
<dbReference type="EMBL" id="AL591974">
    <property type="protein sequence ID" value="CAD00746.1"/>
    <property type="molecule type" value="Genomic_DNA"/>
</dbReference>
<dbReference type="EMBL" id="AF467001">
    <property type="protein sequence ID" value="AAM74001.1"/>
    <property type="molecule type" value="Genomic_DNA"/>
</dbReference>
<dbReference type="PIR" id="AD1102">
    <property type="entry name" value="AD1102"/>
</dbReference>
<dbReference type="RefSeq" id="NP_463750.1">
    <property type="nucleotide sequence ID" value="NC_003210.1"/>
</dbReference>
<dbReference type="RefSeq" id="WP_003723741.1">
    <property type="nucleotide sequence ID" value="NZ_CP149495.1"/>
</dbReference>
<dbReference type="SMR" id="Q8YAC7"/>
<dbReference type="STRING" id="169963.gene:17592855"/>
<dbReference type="PaxDb" id="169963-lmo0219"/>
<dbReference type="EnsemblBacteria" id="CAD00746">
    <property type="protein sequence ID" value="CAD00746"/>
    <property type="gene ID" value="CAD00746"/>
</dbReference>
<dbReference type="GeneID" id="987055"/>
<dbReference type="KEGG" id="lmo:lmo0219"/>
<dbReference type="PATRIC" id="fig|169963.11.peg.224"/>
<dbReference type="eggNOG" id="COG0037">
    <property type="taxonomic scope" value="Bacteria"/>
</dbReference>
<dbReference type="eggNOG" id="COG0634">
    <property type="taxonomic scope" value="Bacteria"/>
</dbReference>
<dbReference type="HOGENOM" id="CLU_018869_0_1_9"/>
<dbReference type="OrthoDB" id="9807403at2"/>
<dbReference type="PhylomeDB" id="Q8YAC7"/>
<dbReference type="BioCyc" id="LMON169963:LMO0219-MONOMER"/>
<dbReference type="Proteomes" id="UP000000817">
    <property type="component" value="Chromosome"/>
</dbReference>
<dbReference type="GO" id="GO:0005737">
    <property type="term" value="C:cytoplasm"/>
    <property type="evidence" value="ECO:0007669"/>
    <property type="project" value="UniProtKB-SubCell"/>
</dbReference>
<dbReference type="GO" id="GO:0005524">
    <property type="term" value="F:ATP binding"/>
    <property type="evidence" value="ECO:0007669"/>
    <property type="project" value="UniProtKB-UniRule"/>
</dbReference>
<dbReference type="GO" id="GO:0052657">
    <property type="term" value="F:guanine phosphoribosyltransferase activity"/>
    <property type="evidence" value="ECO:0007669"/>
    <property type="project" value="RHEA"/>
</dbReference>
<dbReference type="GO" id="GO:0004422">
    <property type="term" value="F:hypoxanthine phosphoribosyltransferase activity"/>
    <property type="evidence" value="ECO:0007669"/>
    <property type="project" value="InterPro"/>
</dbReference>
<dbReference type="GO" id="GO:0046872">
    <property type="term" value="F:metal ion binding"/>
    <property type="evidence" value="ECO:0007669"/>
    <property type="project" value="UniProtKB-KW"/>
</dbReference>
<dbReference type="GO" id="GO:0032267">
    <property type="term" value="F:tRNA(Ile)-lysidine synthase activity"/>
    <property type="evidence" value="ECO:0007669"/>
    <property type="project" value="UniProtKB-EC"/>
</dbReference>
<dbReference type="GO" id="GO:0006166">
    <property type="term" value="P:purine ribonucleoside salvage"/>
    <property type="evidence" value="ECO:0007669"/>
    <property type="project" value="InterPro"/>
</dbReference>
<dbReference type="GO" id="GO:0006400">
    <property type="term" value="P:tRNA modification"/>
    <property type="evidence" value="ECO:0007669"/>
    <property type="project" value="UniProtKB-UniRule"/>
</dbReference>
<dbReference type="CDD" id="cd06223">
    <property type="entry name" value="PRTases_typeI"/>
    <property type="match status" value="1"/>
</dbReference>
<dbReference type="CDD" id="cd01992">
    <property type="entry name" value="TilS_N"/>
    <property type="match status" value="1"/>
</dbReference>
<dbReference type="FunFam" id="3.40.50.2020:FF:000006">
    <property type="entry name" value="Hypoxanthine phosphoribosyltransferase"/>
    <property type="match status" value="1"/>
</dbReference>
<dbReference type="Gene3D" id="3.30.465.60">
    <property type="match status" value="1"/>
</dbReference>
<dbReference type="Gene3D" id="3.40.50.2020">
    <property type="match status" value="1"/>
</dbReference>
<dbReference type="Gene3D" id="3.40.50.620">
    <property type="entry name" value="HUPs"/>
    <property type="match status" value="1"/>
</dbReference>
<dbReference type="HAMAP" id="MF_01161">
    <property type="entry name" value="tRNA_Ile_lys_synt"/>
    <property type="match status" value="1"/>
</dbReference>
<dbReference type="InterPro" id="IPR005904">
    <property type="entry name" value="Hxn_phspho_trans"/>
</dbReference>
<dbReference type="InterPro" id="IPR012796">
    <property type="entry name" value="Lysidine-tRNA-synth_C"/>
</dbReference>
<dbReference type="InterPro" id="IPR000836">
    <property type="entry name" value="PRibTrfase_dom"/>
</dbReference>
<dbReference type="InterPro" id="IPR029057">
    <property type="entry name" value="PRTase-like"/>
</dbReference>
<dbReference type="InterPro" id="IPR014729">
    <property type="entry name" value="Rossmann-like_a/b/a_fold"/>
</dbReference>
<dbReference type="InterPro" id="IPR011063">
    <property type="entry name" value="TilS/TtcA_N"/>
</dbReference>
<dbReference type="InterPro" id="IPR012094">
    <property type="entry name" value="tRNA_Ile_lys_synt"/>
</dbReference>
<dbReference type="InterPro" id="IPR012795">
    <property type="entry name" value="tRNA_Ile_lys_synt_N"/>
</dbReference>
<dbReference type="NCBIfam" id="TIGR01203">
    <property type="entry name" value="HGPRTase"/>
    <property type="match status" value="1"/>
</dbReference>
<dbReference type="NCBIfam" id="TIGR02433">
    <property type="entry name" value="lysidine_TilS_C"/>
    <property type="match status" value="1"/>
</dbReference>
<dbReference type="NCBIfam" id="TIGR02432">
    <property type="entry name" value="lysidine_TilS_N"/>
    <property type="match status" value="1"/>
</dbReference>
<dbReference type="PANTHER" id="PTHR43033">
    <property type="entry name" value="TRNA(ILE)-LYSIDINE SYNTHASE-RELATED"/>
    <property type="match status" value="1"/>
</dbReference>
<dbReference type="PANTHER" id="PTHR43033:SF1">
    <property type="entry name" value="TRNA(ILE)-LYSIDINE SYNTHASE-RELATED"/>
    <property type="match status" value="1"/>
</dbReference>
<dbReference type="Pfam" id="PF01171">
    <property type="entry name" value="ATP_bind_3"/>
    <property type="match status" value="1"/>
</dbReference>
<dbReference type="Pfam" id="PF00156">
    <property type="entry name" value="Pribosyltran"/>
    <property type="match status" value="1"/>
</dbReference>
<dbReference type="Pfam" id="PF11734">
    <property type="entry name" value="TilS_C"/>
    <property type="match status" value="1"/>
</dbReference>
<dbReference type="SMART" id="SM00977">
    <property type="entry name" value="TilS_C"/>
    <property type="match status" value="1"/>
</dbReference>
<dbReference type="SUPFAM" id="SSF52402">
    <property type="entry name" value="Adenine nucleotide alpha hydrolases-like"/>
    <property type="match status" value="1"/>
</dbReference>
<dbReference type="SUPFAM" id="SSF82829">
    <property type="entry name" value="MesJ substrate recognition domain-like"/>
    <property type="match status" value="1"/>
</dbReference>
<dbReference type="SUPFAM" id="SSF56037">
    <property type="entry name" value="PheT/TilS domain"/>
    <property type="match status" value="1"/>
</dbReference>
<dbReference type="SUPFAM" id="SSF53271">
    <property type="entry name" value="PRTase-like"/>
    <property type="match status" value="1"/>
</dbReference>
<dbReference type="PROSITE" id="PS00103">
    <property type="entry name" value="PUR_PYR_PR_TRANSFER"/>
    <property type="match status" value="1"/>
</dbReference>
<reference key="1">
    <citation type="journal article" date="2001" name="Science">
        <title>Comparative genomics of Listeria species.</title>
        <authorList>
            <person name="Glaser P."/>
            <person name="Frangeul L."/>
            <person name="Buchrieser C."/>
            <person name="Rusniok C."/>
            <person name="Amend A."/>
            <person name="Baquero F."/>
            <person name="Berche P."/>
            <person name="Bloecker H."/>
            <person name="Brandt P."/>
            <person name="Chakraborty T."/>
            <person name="Charbit A."/>
            <person name="Chetouani F."/>
            <person name="Couve E."/>
            <person name="de Daruvar A."/>
            <person name="Dehoux P."/>
            <person name="Domann E."/>
            <person name="Dominguez-Bernal G."/>
            <person name="Duchaud E."/>
            <person name="Durant L."/>
            <person name="Dussurget O."/>
            <person name="Entian K.-D."/>
            <person name="Fsihi H."/>
            <person name="Garcia-del Portillo F."/>
            <person name="Garrido P."/>
            <person name="Gautier L."/>
            <person name="Goebel W."/>
            <person name="Gomez-Lopez N."/>
            <person name="Hain T."/>
            <person name="Hauf J."/>
            <person name="Jackson D."/>
            <person name="Jones L.-M."/>
            <person name="Kaerst U."/>
            <person name="Kreft J."/>
            <person name="Kuhn M."/>
            <person name="Kunst F."/>
            <person name="Kurapkat G."/>
            <person name="Madueno E."/>
            <person name="Maitournam A."/>
            <person name="Mata Vicente J."/>
            <person name="Ng E."/>
            <person name="Nedjari H."/>
            <person name="Nordsiek G."/>
            <person name="Novella S."/>
            <person name="de Pablos B."/>
            <person name="Perez-Diaz J.-C."/>
            <person name="Purcell R."/>
            <person name="Remmel B."/>
            <person name="Rose M."/>
            <person name="Schlueter T."/>
            <person name="Simoes N."/>
            <person name="Tierrez A."/>
            <person name="Vazquez-Boland J.-A."/>
            <person name="Voss H."/>
            <person name="Wehland J."/>
            <person name="Cossart P."/>
        </authorList>
    </citation>
    <scope>NUCLEOTIDE SEQUENCE [LARGE SCALE GENOMIC DNA]</scope>
    <source>
        <strain>ATCC BAA-679 / EGD-e</strain>
    </source>
</reference>
<reference key="2">
    <citation type="submission" date="2002-01" db="EMBL/GenBank/DDBJ databases">
        <authorList>
            <person name="Li G."/>
            <person name="Kathariou S."/>
        </authorList>
    </citation>
    <scope>NUCLEOTIDE SEQUENCE [GENOMIC DNA]</scope>
    <source>
        <strain>4b1</strain>
    </source>
</reference>
<evidence type="ECO:0000250" key="1"/>
<evidence type="ECO:0000255" key="2"/>
<evidence type="ECO:0000305" key="3"/>
<accession>Q8YAC7</accession>
<accession>Q8KU03</accession>
<gene>
    <name type="primary">tilS/hprT</name>
    <name type="ordered locus">lmo0219</name>
</gene>
<name>TILS_LISMO</name>
<proteinExistence type="inferred from homology"/>
<feature type="chain" id="PRO_0000181718" description="Bifunctional protein TilS/HprT">
    <location>
        <begin position="1"/>
        <end position="648"/>
    </location>
</feature>
<feature type="binding site" evidence="2">
    <location>
        <begin position="29"/>
        <end position="34"/>
    </location>
    <ligand>
        <name>ATP</name>
        <dbReference type="ChEBI" id="CHEBI:30616"/>
    </ligand>
</feature>
<feature type="binding site" evidence="1">
    <location>
        <position position="627"/>
    </location>
    <ligand>
        <name>Mg(2+)</name>
        <dbReference type="ChEBI" id="CHEBI:18420"/>
        <label>1</label>
    </ligand>
</feature>
<feature type="sequence conflict" description="In Ref. 2; AAM74001." evidence="3" ref="2">
    <original>E</original>
    <variation>D</variation>
    <location>
        <position position="5"/>
    </location>
</feature>
<feature type="sequence conflict" description="In Ref. 2; AAM74001." evidence="3" ref="2">
    <original>L</original>
    <variation>I</variation>
    <location>
        <position position="57"/>
    </location>
</feature>
<feature type="sequence conflict" description="In Ref. 2; AAM74001." evidence="3" ref="2">
    <original>Q</original>
    <variation>H</variation>
    <location>
        <position position="60"/>
    </location>
</feature>
<feature type="sequence conflict" description="In Ref. 2; AAM74001." evidence="3" ref="2">
    <original>K</original>
    <variation>N</variation>
    <location>
        <position position="67"/>
    </location>
</feature>
<feature type="sequence conflict" description="In Ref. 2; AAM74001." evidence="3" ref="2">
    <original>R</original>
    <variation>N</variation>
    <location>
        <position position="70"/>
    </location>
</feature>
<feature type="sequence conflict" description="In Ref. 2; AAM74001." evidence="3" ref="2">
    <original>T</original>
    <variation>A</variation>
    <location>
        <position position="74"/>
    </location>
</feature>
<feature type="sequence conflict" description="In Ref. 2; AAM74001." evidence="3" ref="2">
    <original>R</original>
    <variation>S</variation>
    <location>
        <position position="78"/>
    </location>
</feature>
<feature type="sequence conflict" description="In Ref. 2; AAM74001." evidence="3" ref="2">
    <original>I</original>
    <variation>V</variation>
    <location>
        <position position="90"/>
    </location>
</feature>
<feature type="sequence conflict" description="In Ref. 2; AAM74001." evidence="3" ref="2">
    <original>Q</original>
    <variation>E</variation>
    <location>
        <position position="95"/>
    </location>
</feature>
<feature type="sequence conflict" description="In Ref. 2; AAM74001." evidence="3" ref="2">
    <original>L</original>
    <variation>I</variation>
    <location>
        <position position="101"/>
    </location>
</feature>
<feature type="sequence conflict" description="In Ref. 2; AAM74001." evidence="3" ref="2">
    <original>N</original>
    <variation>K</variation>
    <location>
        <position position="121"/>
    </location>
</feature>
<feature type="sequence conflict" description="In Ref. 2; AAM74001." evidence="3" ref="2">
    <original>V</original>
    <variation>A</variation>
    <location>
        <position position="126"/>
    </location>
</feature>
<feature type="sequence conflict" description="In Ref. 2; AAM74001." evidence="3" ref="2">
    <original>Q</original>
    <variation>R</variation>
    <location>
        <position position="255"/>
    </location>
</feature>
<feature type="sequence conflict" description="In Ref. 2; AAM74001." evidence="3" ref="2">
    <original>SS</original>
    <variation>TN</variation>
    <location>
        <begin position="261"/>
        <end position="262"/>
    </location>
</feature>
<feature type="sequence conflict" description="In Ref. 2; AAM74001." evidence="3" ref="2">
    <original>I</original>
    <variation>V</variation>
    <location>
        <position position="318"/>
    </location>
</feature>
<keyword id="KW-0067">ATP-binding</keyword>
<keyword id="KW-0963">Cytoplasm</keyword>
<keyword id="KW-0328">Glycosyltransferase</keyword>
<keyword id="KW-0436">Ligase</keyword>
<keyword id="KW-0460">Magnesium</keyword>
<keyword id="KW-0479">Metal-binding</keyword>
<keyword id="KW-0547">Nucleotide-binding</keyword>
<keyword id="KW-1185">Reference proteome</keyword>
<keyword id="KW-0808">Transferase</keyword>
<keyword id="KW-0819">tRNA processing</keyword>
<protein>
    <recommendedName>
        <fullName>Bifunctional protein TilS/HprT</fullName>
    </recommendedName>
    <domain>
        <recommendedName>
            <fullName>tRNA(Ile)-lysidine synthase</fullName>
            <ecNumber>6.3.4.19</ecNumber>
        </recommendedName>
        <alternativeName>
            <fullName>tRNA(Ile)-2-lysyl-cytidine synthase</fullName>
        </alternativeName>
        <alternativeName>
            <fullName>tRNA(Ile)-lysidine synthetase</fullName>
        </alternativeName>
    </domain>
    <domain>
        <recommendedName>
            <fullName>Hypoxanthine-guanine phosphoribosyltransferase</fullName>
            <shortName>HGPRT</shortName>
            <shortName>HGPRTase</shortName>
            <ecNumber>2.4.2.8</ecNumber>
        </recommendedName>
    </domain>
</protein>